<proteinExistence type="inferred from homology"/>
<comment type="function">
    <text evidence="1">Catalyzes the conversion of 3'-phosphate to a 2',3'-cyclic phosphodiester at the end of RNA. The mechanism of action of the enzyme occurs in 3 steps: (A) adenylation of the enzyme by ATP; (B) transfer of adenylate to an RNA-N3'P to produce RNA-N3'PP5'A; (C) and attack of the adjacent 2'-hydroxyl on the 3'-phosphorus in the diester linkage to produce the cyclic end product. The biological role of this enzyme is unknown but it is likely to function in some aspects of cellular RNA processing.</text>
</comment>
<comment type="catalytic activity">
    <reaction evidence="1">
        <text>a 3'-end 3'-phospho-ribonucleotide-RNA + ATP = a 3'-end 2',3'-cyclophospho-ribonucleotide-RNA + AMP + diphosphate</text>
        <dbReference type="Rhea" id="RHEA:23976"/>
        <dbReference type="Rhea" id="RHEA-COMP:10463"/>
        <dbReference type="Rhea" id="RHEA-COMP:10464"/>
        <dbReference type="ChEBI" id="CHEBI:30616"/>
        <dbReference type="ChEBI" id="CHEBI:33019"/>
        <dbReference type="ChEBI" id="CHEBI:83062"/>
        <dbReference type="ChEBI" id="CHEBI:83064"/>
        <dbReference type="ChEBI" id="CHEBI:456215"/>
        <dbReference type="EC" id="6.5.1.4"/>
    </reaction>
</comment>
<comment type="subcellular location">
    <subcellularLocation>
        <location evidence="1">Cytoplasm</location>
    </subcellularLocation>
</comment>
<comment type="similarity">
    <text evidence="1">Belongs to the RNA 3'-terminal cyclase family. Type 1 subfamily.</text>
</comment>
<comment type="sequence caution" evidence="2">
    <conflict type="erroneous initiation">
        <sequence resource="EMBL-CDS" id="ABE09349"/>
    </conflict>
</comment>
<keyword id="KW-0067">ATP-binding</keyword>
<keyword id="KW-0963">Cytoplasm</keyword>
<keyword id="KW-0436">Ligase</keyword>
<keyword id="KW-0547">Nucleotide-binding</keyword>
<reference key="1">
    <citation type="journal article" date="2006" name="Proc. Natl. Acad. Sci. U.S.A.">
        <title>Identification of genes subject to positive selection in uropathogenic strains of Escherichia coli: a comparative genomics approach.</title>
        <authorList>
            <person name="Chen S.L."/>
            <person name="Hung C.-S."/>
            <person name="Xu J."/>
            <person name="Reigstad C.S."/>
            <person name="Magrini V."/>
            <person name="Sabo A."/>
            <person name="Blasiar D."/>
            <person name="Bieri T."/>
            <person name="Meyer R.R."/>
            <person name="Ozersky P."/>
            <person name="Armstrong J.R."/>
            <person name="Fulton R.S."/>
            <person name="Latreille J.P."/>
            <person name="Spieth J."/>
            <person name="Hooton T.M."/>
            <person name="Mardis E.R."/>
            <person name="Hultgren S.J."/>
            <person name="Gordon J.I."/>
        </authorList>
    </citation>
    <scope>NUCLEOTIDE SEQUENCE [LARGE SCALE GENOMIC DNA]</scope>
    <source>
        <strain>UTI89 / UPEC</strain>
    </source>
</reference>
<organism>
    <name type="scientific">Escherichia coli (strain UTI89 / UPEC)</name>
    <dbReference type="NCBI Taxonomy" id="364106"/>
    <lineage>
        <taxon>Bacteria</taxon>
        <taxon>Pseudomonadati</taxon>
        <taxon>Pseudomonadota</taxon>
        <taxon>Gammaproteobacteria</taxon>
        <taxon>Enterobacterales</taxon>
        <taxon>Enterobacteriaceae</taxon>
        <taxon>Escherichia</taxon>
    </lineage>
</organism>
<protein>
    <recommendedName>
        <fullName evidence="1">RNA 3'-terminal phosphate cyclase</fullName>
        <shortName evidence="1">RNA cyclase</shortName>
        <shortName evidence="1">RNA-3'-phosphate cyclase</shortName>
        <ecNumber evidence="1">6.5.1.4</ecNumber>
    </recommendedName>
</protein>
<feature type="chain" id="PRO_0000264794" description="RNA 3'-terminal phosphate cyclase">
    <location>
        <begin position="1"/>
        <end position="338"/>
    </location>
</feature>
<feature type="active site" description="Tele-AMP-histidine intermediate" evidence="1">
    <location>
        <position position="308"/>
    </location>
</feature>
<feature type="binding site" evidence="1">
    <location>
        <position position="103"/>
    </location>
    <ligand>
        <name>ATP</name>
        <dbReference type="ChEBI" id="CHEBI:30616"/>
    </ligand>
</feature>
<feature type="binding site" evidence="1">
    <location>
        <begin position="283"/>
        <end position="287"/>
    </location>
    <ligand>
        <name>ATP</name>
        <dbReference type="ChEBI" id="CHEBI:30616"/>
    </ligand>
</feature>
<dbReference type="EC" id="6.5.1.4" evidence="1"/>
<dbReference type="EMBL" id="CP000243">
    <property type="protein sequence ID" value="ABE09349.1"/>
    <property type="status" value="ALT_INIT"/>
    <property type="molecule type" value="Genomic_DNA"/>
</dbReference>
<dbReference type="RefSeq" id="WP_001350819.1">
    <property type="nucleotide sequence ID" value="NZ_CP064825.1"/>
</dbReference>
<dbReference type="SMR" id="Q1R5L5"/>
<dbReference type="KEGG" id="eci:UTI89_C3920"/>
<dbReference type="HOGENOM" id="CLU_027882_0_0_6"/>
<dbReference type="Proteomes" id="UP000001952">
    <property type="component" value="Chromosome"/>
</dbReference>
<dbReference type="GO" id="GO:0005737">
    <property type="term" value="C:cytoplasm"/>
    <property type="evidence" value="ECO:0007669"/>
    <property type="project" value="UniProtKB-SubCell"/>
</dbReference>
<dbReference type="GO" id="GO:0005524">
    <property type="term" value="F:ATP binding"/>
    <property type="evidence" value="ECO:0007669"/>
    <property type="project" value="UniProtKB-KW"/>
</dbReference>
<dbReference type="GO" id="GO:0003963">
    <property type="term" value="F:RNA-3'-phosphate cyclase activity"/>
    <property type="evidence" value="ECO:0007669"/>
    <property type="project" value="UniProtKB-UniRule"/>
</dbReference>
<dbReference type="GO" id="GO:0006396">
    <property type="term" value="P:RNA processing"/>
    <property type="evidence" value="ECO:0007669"/>
    <property type="project" value="InterPro"/>
</dbReference>
<dbReference type="FunFam" id="3.65.10.20:FF:000002">
    <property type="entry name" value="GM19193"/>
    <property type="match status" value="1"/>
</dbReference>
<dbReference type="FunFam" id="3.30.360.20:FF:000003">
    <property type="entry name" value="RNA 3'-terminal phosphate cyclase"/>
    <property type="match status" value="1"/>
</dbReference>
<dbReference type="Gene3D" id="3.65.10.20">
    <property type="entry name" value="RNA 3'-terminal phosphate cyclase domain"/>
    <property type="match status" value="1"/>
</dbReference>
<dbReference type="Gene3D" id="3.30.360.20">
    <property type="entry name" value="RNA 3'-terminal phosphate cyclase, insert domain"/>
    <property type="match status" value="1"/>
</dbReference>
<dbReference type="HAMAP" id="MF_00200">
    <property type="entry name" value="RTC"/>
    <property type="match status" value="1"/>
</dbReference>
<dbReference type="InterPro" id="IPR013791">
    <property type="entry name" value="RNA3'-term_phos_cycl_insert"/>
</dbReference>
<dbReference type="InterPro" id="IPR023797">
    <property type="entry name" value="RNA3'_phos_cyclase_dom"/>
</dbReference>
<dbReference type="InterPro" id="IPR037136">
    <property type="entry name" value="RNA3'_phos_cyclase_dom_sf"/>
</dbReference>
<dbReference type="InterPro" id="IPR000228">
    <property type="entry name" value="RNA3'_term_phos_cyc"/>
</dbReference>
<dbReference type="InterPro" id="IPR017770">
    <property type="entry name" value="RNA3'_term_phos_cyc_type_1"/>
</dbReference>
<dbReference type="InterPro" id="IPR020719">
    <property type="entry name" value="RNA3'_term_phos_cycl-like_CS"/>
</dbReference>
<dbReference type="InterPro" id="IPR013792">
    <property type="entry name" value="RNA3'P_cycl/enolpyr_Trfase_a/b"/>
</dbReference>
<dbReference type="InterPro" id="IPR036553">
    <property type="entry name" value="RPTC_insert"/>
</dbReference>
<dbReference type="NCBIfam" id="NF003246">
    <property type="entry name" value="PRK04204.1-2"/>
    <property type="match status" value="1"/>
</dbReference>
<dbReference type="NCBIfam" id="NF003247">
    <property type="entry name" value="PRK04204.1-3"/>
    <property type="match status" value="1"/>
</dbReference>
<dbReference type="NCBIfam" id="TIGR03399">
    <property type="entry name" value="RNA_3prim_cycl"/>
    <property type="match status" value="1"/>
</dbReference>
<dbReference type="PANTHER" id="PTHR11096">
    <property type="entry name" value="RNA 3' TERMINAL PHOSPHATE CYCLASE"/>
    <property type="match status" value="1"/>
</dbReference>
<dbReference type="PANTHER" id="PTHR11096:SF0">
    <property type="entry name" value="RNA 3'-TERMINAL PHOSPHATE CYCLASE"/>
    <property type="match status" value="1"/>
</dbReference>
<dbReference type="Pfam" id="PF01137">
    <property type="entry name" value="RTC"/>
    <property type="match status" value="1"/>
</dbReference>
<dbReference type="Pfam" id="PF05189">
    <property type="entry name" value="RTC_insert"/>
    <property type="match status" value="1"/>
</dbReference>
<dbReference type="PIRSF" id="PIRSF005378">
    <property type="entry name" value="RNA3'_term_phos_cycl_euk"/>
    <property type="match status" value="1"/>
</dbReference>
<dbReference type="SUPFAM" id="SSF55205">
    <property type="entry name" value="EPT/RTPC-like"/>
    <property type="match status" value="2"/>
</dbReference>
<dbReference type="SUPFAM" id="SSF52913">
    <property type="entry name" value="RNA 3'-terminal phosphate cyclase, RPTC, insert domain"/>
    <property type="match status" value="1"/>
</dbReference>
<dbReference type="PROSITE" id="PS01287">
    <property type="entry name" value="RTC"/>
    <property type="match status" value="1"/>
</dbReference>
<gene>
    <name evidence="1" type="primary">rtcA</name>
    <name type="ordered locus">UTI89_C3920</name>
</gene>
<sequence>MKRMIALDGAQGEGGGQILRSALSLSMITGQPFTITGIRAGRAKPGLLRQHLTAVKAAAEICRATVEGAELGSQRLVFRPGTVRGGDYRFAIGSAGSCTLVLQTVLPALWFADGPSRVEVSGGTDNPSAPPADFIRRVLEPLLAKIGVHQQTTLLRHGFYPAGGGVVATEVSPVASFNSLQLGERGNIVQMRGEVLLAGVPRHVAEREIATLAGSFSLHEQNIHNLPRDQGPGNTVSLEVESENITERFFVVGEKRVSAEVVAAQLVKEVKRYLASPAAVGEYLADQLVLPMALAGTGEFTVAHPSCHLLTNIAVVERFLPVRFGLIETDGVTRVSIE</sequence>
<evidence type="ECO:0000255" key="1">
    <source>
        <dbReference type="HAMAP-Rule" id="MF_00200"/>
    </source>
</evidence>
<evidence type="ECO:0000305" key="2"/>
<accession>Q1R5L5</accession>
<name>RTCA_ECOUT</name>